<accession>P09299</accession>
<organismHost>
    <name type="scientific">Homo sapiens</name>
    <name type="common">Human</name>
    <dbReference type="NCBI Taxonomy" id="9606"/>
</organismHost>
<keyword id="KW-0067">ATP-binding</keyword>
<keyword id="KW-0235">DNA replication</keyword>
<keyword id="KW-0238">DNA-binding</keyword>
<keyword id="KW-1048">Host nucleus</keyword>
<keyword id="KW-0547">Nucleotide-binding</keyword>
<keyword id="KW-1185">Reference proteome</keyword>
<feature type="chain" id="PRO_0000115873" description="Replication origin-binding protein">
    <location>
        <begin position="1"/>
        <end position="835"/>
    </location>
</feature>
<feature type="domain" description="Helicase ATP-binding" evidence="2">
    <location>
        <begin position="54"/>
        <end position="215"/>
    </location>
</feature>
<feature type="binding site" evidence="2">
    <location>
        <begin position="67"/>
        <end position="74"/>
    </location>
    <ligand>
        <name>ATP</name>
        <dbReference type="ChEBI" id="CHEBI:30616"/>
    </ligand>
</feature>
<evidence type="ECO:0000250" key="1"/>
<evidence type="ECO:0000255" key="2">
    <source>
        <dbReference type="PROSITE-ProRule" id="PRU00541"/>
    </source>
</evidence>
<evidence type="ECO:0000305" key="3"/>
<name>OBP_VZVD</name>
<comment type="function">
    <text evidence="1">Functions as a docking protein to recruit essential components of the viral replication machinery to viral DNA origins. In the presence of the major DNA-binding protein, opens dsDNA leading to a conformational change in the origin that facilitates DNA unwinding and subsequent replication (By similarity).</text>
</comment>
<comment type="subunit">
    <text evidence="1">Homodimer. Interacts with the major DNA-binding protein. Interacts with the helicase/primase component 52 and the polymerase accessory protein (By similarity).</text>
</comment>
<comment type="subcellular location">
    <subcellularLocation>
        <location evidence="3">Host nucleus</location>
    </subcellularLocation>
</comment>
<comment type="similarity">
    <text evidence="3">Belongs to the herpesviridae OriBP family.</text>
</comment>
<reference key="1">
    <citation type="journal article" date="1986" name="J. Gen. Virol.">
        <title>The complete DNA sequence of varicella-zoster virus.</title>
        <authorList>
            <person name="Davison A.J."/>
            <person name="Scott J.E."/>
        </authorList>
    </citation>
    <scope>NUCLEOTIDE SEQUENCE [LARGE SCALE GENOMIC DNA]</scope>
</reference>
<organism>
    <name type="scientific">Varicella-zoster virus (strain Dumas)</name>
    <name type="common">HHV-3</name>
    <name type="synonym">Human herpesvirus 3</name>
    <dbReference type="NCBI Taxonomy" id="10338"/>
    <lineage>
        <taxon>Viruses</taxon>
        <taxon>Duplodnaviria</taxon>
        <taxon>Heunggongvirae</taxon>
        <taxon>Peploviricota</taxon>
        <taxon>Herviviricetes</taxon>
        <taxon>Herpesvirales</taxon>
        <taxon>Orthoherpesviridae</taxon>
        <taxon>Alphaherpesvirinae</taxon>
        <taxon>Varicellovirus</taxon>
        <taxon>Varicellovirus humanalpha3</taxon>
        <taxon>Human herpesvirus 3</taxon>
    </lineage>
</organism>
<dbReference type="EMBL" id="X04370">
    <property type="protein sequence ID" value="CAA27933.1"/>
    <property type="molecule type" value="Genomic_DNA"/>
</dbReference>
<dbReference type="PIR" id="G27344">
    <property type="entry name" value="WZBE51"/>
</dbReference>
<dbReference type="Proteomes" id="UP000002602">
    <property type="component" value="Genome"/>
</dbReference>
<dbReference type="GO" id="GO:0042025">
    <property type="term" value="C:host cell nucleus"/>
    <property type="evidence" value="ECO:0007669"/>
    <property type="project" value="UniProtKB-SubCell"/>
</dbReference>
<dbReference type="GO" id="GO:0005524">
    <property type="term" value="F:ATP binding"/>
    <property type="evidence" value="ECO:0007669"/>
    <property type="project" value="UniProtKB-KW"/>
</dbReference>
<dbReference type="GO" id="GO:0016887">
    <property type="term" value="F:ATP hydrolysis activity"/>
    <property type="evidence" value="ECO:0007669"/>
    <property type="project" value="InterPro"/>
</dbReference>
<dbReference type="GO" id="GO:0003677">
    <property type="term" value="F:DNA binding"/>
    <property type="evidence" value="ECO:0000314"/>
    <property type="project" value="UniProtKB"/>
</dbReference>
<dbReference type="GO" id="GO:0003688">
    <property type="term" value="F:DNA replication origin binding"/>
    <property type="evidence" value="ECO:0007669"/>
    <property type="project" value="InterPro"/>
</dbReference>
<dbReference type="GO" id="GO:0039686">
    <property type="term" value="P:bidirectional double-stranded viral DNA replication"/>
    <property type="evidence" value="ECO:0000314"/>
    <property type="project" value="UniProtKB"/>
</dbReference>
<dbReference type="GO" id="GO:0006260">
    <property type="term" value="P:DNA replication"/>
    <property type="evidence" value="ECO:0007669"/>
    <property type="project" value="UniProtKB-KW"/>
</dbReference>
<dbReference type="Gene3D" id="3.40.50.300">
    <property type="entry name" value="P-loop containing nucleotide triphosphate hydrolases"/>
    <property type="match status" value="1"/>
</dbReference>
<dbReference type="InterPro" id="IPR003593">
    <property type="entry name" value="AAA+_ATPase"/>
</dbReference>
<dbReference type="InterPro" id="IPR014001">
    <property type="entry name" value="Helicase_ATP-bd"/>
</dbReference>
<dbReference type="InterPro" id="IPR027417">
    <property type="entry name" value="P-loop_NTPase"/>
</dbReference>
<dbReference type="InterPro" id="IPR003450">
    <property type="entry name" value="Replication_origin-bd"/>
</dbReference>
<dbReference type="Pfam" id="PF02399">
    <property type="entry name" value="Herpes_ori_bp"/>
    <property type="match status" value="1"/>
</dbReference>
<dbReference type="SMART" id="SM00382">
    <property type="entry name" value="AAA"/>
    <property type="match status" value="1"/>
</dbReference>
<dbReference type="SMART" id="SM00487">
    <property type="entry name" value="DEXDc"/>
    <property type="match status" value="1"/>
</dbReference>
<dbReference type="SUPFAM" id="SSF52540">
    <property type="entry name" value="P-loop containing nucleoside triphosphate hydrolases"/>
    <property type="match status" value="1"/>
</dbReference>
<dbReference type="PROSITE" id="PS51192">
    <property type="entry name" value="HELICASE_ATP_BIND_1"/>
    <property type="match status" value="1"/>
</dbReference>
<proteinExistence type="inferred from homology"/>
<sequence>MSPNTGESNAAVYASSTQLARALYGGDLVSWIKHTHPGISLELQLDVPVKLIKPGMSQTRPVTVVRAPMGSGKTTALLEWLQHALKADISVLVVSCRRSFTQTLIQRFNDAGLSGFVTYLTSETYIMGFKRLIVQLESLHRVSSEAIDSYDVLILDEVMSVIGQLYSPTMRRLSAVDSLLYRLLNRCSQIIAMDATVNSQFIDLISGLRGDENIHTIVCTYAGVGFSGRTCTILRDMGIDTLVRVIKRSPEHEDVRTIHQLRGTFFDELALRLQCGHNICIFSSTLSFSELVAQFCAIFTDSILILNSTRPLCNVNEWKHFRVLVYTTVVTVGLSFDMAHFHSMFAYIKPMSYGPDMVSVYQSLGRVRLLLLNEVLMYVDGSRTRCGPLFSPMLLNFTIANKFQWFPTHTQITNKLCCAFRQRCANAFTRSNTHLFSRFKYKHLFERCSLWSLADSINILQTLLASNQILVVLDGMGPITDVSPVQFCAFIHDLRHSANAVASCMRSLRQDNDSCLTDFGPSGFMADNITAFMEKYLMESINTEEQIKVFKALACPIEQPRLVNTAILGACIRIPEALEAFDVFQKIYTHYASGWFPVLDKTGEFSIATITTAPNLTTHWELFRRCAYIAKTLKWNPSTEGCVTQVLDTDINTLFNQHGDSLAQLIFEVMRCNVTDAKIILNRPVWRTTGFLDGCHNQCFRPIPTKHEYNIALFRLIWEQLFGARVTKSTQTFPGSTRVKNLKKKDLETLLDSINVDRSACRTYRQLYNLLMSQRHSFSQQRYKITAPAWARHVYFQAHQMHLAPHAEAMLQLALSELSPGSWPRINGAVNFESL</sequence>
<gene>
    <name type="ORF">ORF51</name>
</gene>
<protein>
    <recommendedName>
        <fullName>Replication origin-binding protein</fullName>
        <shortName>OBP</shortName>
    </recommendedName>
    <alternativeName>
        <fullName>OriBP</fullName>
    </alternativeName>
</protein>